<accession>C3MPC7</accession>
<proteinExistence type="inferred from homology"/>
<reference key="1">
    <citation type="journal article" date="2009" name="Proc. Natl. Acad. Sci. U.S.A.">
        <title>Biogeography of the Sulfolobus islandicus pan-genome.</title>
        <authorList>
            <person name="Reno M.L."/>
            <person name="Held N.L."/>
            <person name="Fields C.J."/>
            <person name="Burke P.V."/>
            <person name="Whitaker R.J."/>
        </authorList>
    </citation>
    <scope>NUCLEOTIDE SEQUENCE [LARGE SCALE GENOMIC DNA]</scope>
    <source>
        <strain>L.S.2.15 / Lassen #1</strain>
    </source>
</reference>
<protein>
    <recommendedName>
        <fullName evidence="1">Probable ribonuclease FAU-1</fullName>
        <ecNumber evidence="1">3.1.26.-</ecNumber>
    </recommendedName>
    <alternativeName>
        <fullName evidence="1">RNA-binding protein FAU-1</fullName>
    </alternativeName>
</protein>
<feature type="chain" id="PRO_1000216188" description="Probable ribonuclease FAU-1">
    <location>
        <begin position="1"/>
        <end position="424"/>
    </location>
</feature>
<name>FAU1_SACI2</name>
<gene>
    <name evidence="1" type="primary">fau-1</name>
    <name type="ordered locus">LS215_1229</name>
</gene>
<evidence type="ECO:0000255" key="1">
    <source>
        <dbReference type="HAMAP-Rule" id="MF_01910"/>
    </source>
</evidence>
<keyword id="KW-0255">Endonuclease</keyword>
<keyword id="KW-0378">Hydrolase</keyword>
<keyword id="KW-0540">Nuclease</keyword>
<keyword id="KW-0694">RNA-binding</keyword>
<keyword id="KW-0698">rRNA processing</keyword>
<organism>
    <name type="scientific">Saccharolobus islandicus (strain L.S.2.15 / Lassen #1)</name>
    <name type="common">Sulfolobus islandicus</name>
    <dbReference type="NCBI Taxonomy" id="429572"/>
    <lineage>
        <taxon>Archaea</taxon>
        <taxon>Thermoproteota</taxon>
        <taxon>Thermoprotei</taxon>
        <taxon>Sulfolobales</taxon>
        <taxon>Sulfolobaceae</taxon>
        <taxon>Saccharolobus</taxon>
    </lineage>
</organism>
<sequence>MKGRVRIRGIYATALTSIFSSLSYEIVQQSVEIAERFMREVNNLPADITIKDFEYDRGKIIVMGNGTIEEDLHDVFKYSFHWKSPIKLYSVIEADESCTYGNFKVEPCLEEGIVIKPPYDGKIVLSETKAVSKYAMVWRGKGVTTFSEHINNEGERLRLLTLSSPLNRKGYNVKWRSNAKYATLNELKEDLERLVLRYENREFRDQGEDFYLITLSLPDKLHLDEVRKSIVNTVKYHHMLKLSYNREVDSLEKDKEGSPVKLLEALISDFMKIEHIKADGKAIYLRGGKVIEKEVNNDGYRITLRREINGNGVLDGIGKRIENGDYDIVEYNSDKWYQIHRYYSGIDNSLKGIYINISTPPELLKGKIRYLDLEIDIAIRDSEIIVLDEDELNKKSIYMHSSLVNKAKEVANYLIDCIQQNKLI</sequence>
<dbReference type="EC" id="3.1.26.-" evidence="1"/>
<dbReference type="EMBL" id="CP001399">
    <property type="protein sequence ID" value="ACP35240.1"/>
    <property type="molecule type" value="Genomic_DNA"/>
</dbReference>
<dbReference type="RefSeq" id="WP_012713577.1">
    <property type="nucleotide sequence ID" value="NC_012589.1"/>
</dbReference>
<dbReference type="SMR" id="C3MPC7"/>
<dbReference type="GeneID" id="7797738"/>
<dbReference type="KEGG" id="sis:LS215_1229"/>
<dbReference type="HOGENOM" id="CLU_044303_0_0_2"/>
<dbReference type="OrthoDB" id="84798at2157"/>
<dbReference type="Proteomes" id="UP000001747">
    <property type="component" value="Chromosome"/>
</dbReference>
<dbReference type="GO" id="GO:0035925">
    <property type="term" value="F:mRNA 3'-UTR AU-rich region binding"/>
    <property type="evidence" value="ECO:0007669"/>
    <property type="project" value="UniProtKB-UniRule"/>
</dbReference>
<dbReference type="GO" id="GO:0016891">
    <property type="term" value="F:RNA endonuclease activity, producing 5'-phosphomonoesters"/>
    <property type="evidence" value="ECO:0007669"/>
    <property type="project" value="UniProtKB-UniRule"/>
</dbReference>
<dbReference type="GO" id="GO:0006364">
    <property type="term" value="P:rRNA processing"/>
    <property type="evidence" value="ECO:0007669"/>
    <property type="project" value="UniProtKB-UniRule"/>
</dbReference>
<dbReference type="Gene3D" id="2.40.380.10">
    <property type="entry name" value="FomD-like"/>
    <property type="match status" value="1"/>
</dbReference>
<dbReference type="HAMAP" id="MF_01910">
    <property type="entry name" value="RNA_binding_AU_1"/>
    <property type="match status" value="1"/>
</dbReference>
<dbReference type="InterPro" id="IPR007295">
    <property type="entry name" value="DUF402"/>
</dbReference>
<dbReference type="InterPro" id="IPR035930">
    <property type="entry name" value="FomD-like_sf"/>
</dbReference>
<dbReference type="InterPro" id="IPR050212">
    <property type="entry name" value="Ntdp-like"/>
</dbReference>
<dbReference type="InterPro" id="IPR016730">
    <property type="entry name" value="RNA-bd_FAU-1"/>
</dbReference>
<dbReference type="PANTHER" id="PTHR39159">
    <property type="match status" value="1"/>
</dbReference>
<dbReference type="PANTHER" id="PTHR39159:SF1">
    <property type="entry name" value="UPF0374 PROTEIN YGAC"/>
    <property type="match status" value="1"/>
</dbReference>
<dbReference type="Pfam" id="PF04167">
    <property type="entry name" value="DUF402"/>
    <property type="match status" value="1"/>
</dbReference>
<dbReference type="PIRSF" id="PIRSF018644">
    <property type="entry name" value="RNA-binding_FAU-1"/>
    <property type="match status" value="1"/>
</dbReference>
<dbReference type="SUPFAM" id="SSF159234">
    <property type="entry name" value="FomD-like"/>
    <property type="match status" value="1"/>
</dbReference>
<comment type="function">
    <text evidence="1">Probable RNase involved in rRNA stability through maturation and/or degradation of precursor rRNAs. Binds to RNA in loop regions with AU-rich sequences.</text>
</comment>
<comment type="similarity">
    <text evidence="1">Belongs to the FAU-1 family.</text>
</comment>